<proteinExistence type="inferred from homology"/>
<comment type="function">
    <text evidence="1">DNA-binding global transcriptional regulator which is involved in the adaptive response to starvation and acts by directly or indirectly controlling the expression of numerous genes in response to nutrient availability. During rapid exponential growth, CodY is highly active and represses genes whose products allow adaptation to nutrient depletion.</text>
</comment>
<comment type="subcellular location">
    <subcellularLocation>
        <location evidence="1">Cytoplasm</location>
    </subcellularLocation>
</comment>
<comment type="similarity">
    <text evidence="1">Belongs to the CodY family.</text>
</comment>
<sequence length="257" mass="28625">MSLLSKTRELNTLLQKHKGIAVDFKDVARKISEVTVTNVFIVSRRGKILGHSLNELLKSNRINQMLEDRHIPSEYTDKLIDVKQTVSNIGIDDDLSVFPPENRDTFIDSKTTIFPVLGGGERLGTLVLGRVSDDFTDNDLVLGEYAATVLGMEILREKHSEVEQEARDKAAINMAINSLSYSEREAIEHIFEELGGKEGLLIASKVADRVGITRSVIVNALRKLESAGVIESRSLGMKGTFIKVKKEQFLDELEKSN</sequence>
<accession>B9DPG7</accession>
<keyword id="KW-0963">Cytoplasm</keyword>
<keyword id="KW-0238">DNA-binding</keyword>
<keyword id="KW-1185">Reference proteome</keyword>
<keyword id="KW-0678">Repressor</keyword>
<keyword id="KW-0804">Transcription</keyword>
<keyword id="KW-0805">Transcription regulation</keyword>
<organism>
    <name type="scientific">Staphylococcus carnosus (strain TM300)</name>
    <dbReference type="NCBI Taxonomy" id="396513"/>
    <lineage>
        <taxon>Bacteria</taxon>
        <taxon>Bacillati</taxon>
        <taxon>Bacillota</taxon>
        <taxon>Bacilli</taxon>
        <taxon>Bacillales</taxon>
        <taxon>Staphylococcaceae</taxon>
        <taxon>Staphylococcus</taxon>
    </lineage>
</organism>
<reference key="1">
    <citation type="journal article" date="2009" name="Appl. Environ. Microbiol.">
        <title>Genome analysis of the meat starter culture bacterium Staphylococcus carnosus TM300.</title>
        <authorList>
            <person name="Rosenstein R."/>
            <person name="Nerz C."/>
            <person name="Biswas L."/>
            <person name="Resch A."/>
            <person name="Raddatz G."/>
            <person name="Schuster S.C."/>
            <person name="Goetz F."/>
        </authorList>
    </citation>
    <scope>NUCLEOTIDE SEQUENCE [LARGE SCALE GENOMIC DNA]</scope>
    <source>
        <strain>TM300</strain>
    </source>
</reference>
<dbReference type="EMBL" id="AM295250">
    <property type="protein sequence ID" value="CAL27799.1"/>
    <property type="molecule type" value="Genomic_DNA"/>
</dbReference>
<dbReference type="RefSeq" id="WP_015900140.1">
    <property type="nucleotide sequence ID" value="NC_012121.1"/>
</dbReference>
<dbReference type="SMR" id="B9DPG7"/>
<dbReference type="KEGG" id="sca:SCA_0890"/>
<dbReference type="eggNOG" id="COG4465">
    <property type="taxonomic scope" value="Bacteria"/>
</dbReference>
<dbReference type="HOGENOM" id="CLU_089581_0_0_9"/>
<dbReference type="OrthoDB" id="2056at2"/>
<dbReference type="BioCyc" id="SCAR396513:SCA_RS04490-MONOMER"/>
<dbReference type="Proteomes" id="UP000000444">
    <property type="component" value="Chromosome"/>
</dbReference>
<dbReference type="GO" id="GO:0005737">
    <property type="term" value="C:cytoplasm"/>
    <property type="evidence" value="ECO:0007669"/>
    <property type="project" value="UniProtKB-SubCell"/>
</dbReference>
<dbReference type="GO" id="GO:0003677">
    <property type="term" value="F:DNA binding"/>
    <property type="evidence" value="ECO:0007669"/>
    <property type="project" value="UniProtKB-UniRule"/>
</dbReference>
<dbReference type="GO" id="GO:0003700">
    <property type="term" value="F:DNA-binding transcription factor activity"/>
    <property type="evidence" value="ECO:0007669"/>
    <property type="project" value="InterPro"/>
</dbReference>
<dbReference type="GO" id="GO:0005525">
    <property type="term" value="F:GTP binding"/>
    <property type="evidence" value="ECO:0007669"/>
    <property type="project" value="InterPro"/>
</dbReference>
<dbReference type="GO" id="GO:0045892">
    <property type="term" value="P:negative regulation of DNA-templated transcription"/>
    <property type="evidence" value="ECO:0007669"/>
    <property type="project" value="UniProtKB-UniRule"/>
</dbReference>
<dbReference type="FunFam" id="1.10.10.10:FF:000034">
    <property type="entry name" value="GTP-sensing transcriptional pleiotropic repressor CodY"/>
    <property type="match status" value="1"/>
</dbReference>
<dbReference type="FunFam" id="3.30.450.40:FF:000003">
    <property type="entry name" value="GTP-sensing transcriptional pleiotropic repressor CodY"/>
    <property type="match status" value="1"/>
</dbReference>
<dbReference type="Gene3D" id="3.30.450.40">
    <property type="match status" value="1"/>
</dbReference>
<dbReference type="Gene3D" id="1.10.10.10">
    <property type="entry name" value="Winged helix-like DNA-binding domain superfamily/Winged helix DNA-binding domain"/>
    <property type="match status" value="1"/>
</dbReference>
<dbReference type="HAMAP" id="MF_00621">
    <property type="entry name" value="HTH_type_CodY"/>
    <property type="match status" value="1"/>
</dbReference>
<dbReference type="InterPro" id="IPR014154">
    <property type="entry name" value="CodY"/>
</dbReference>
<dbReference type="InterPro" id="IPR029016">
    <property type="entry name" value="GAF-like_dom_sf"/>
</dbReference>
<dbReference type="InterPro" id="IPR013198">
    <property type="entry name" value="GTP_trans_reg_CodY_C"/>
</dbReference>
<dbReference type="InterPro" id="IPR010312">
    <property type="entry name" value="Transc_reg_CodY_N"/>
</dbReference>
<dbReference type="InterPro" id="IPR036388">
    <property type="entry name" value="WH-like_DNA-bd_sf"/>
</dbReference>
<dbReference type="InterPro" id="IPR036390">
    <property type="entry name" value="WH_DNA-bd_sf"/>
</dbReference>
<dbReference type="NCBIfam" id="TIGR02787">
    <property type="entry name" value="codY_Gpos"/>
    <property type="match status" value="1"/>
</dbReference>
<dbReference type="NCBIfam" id="NF003170">
    <property type="entry name" value="PRK04158.1"/>
    <property type="match status" value="1"/>
</dbReference>
<dbReference type="PANTHER" id="PTHR40062:SF1">
    <property type="entry name" value="GLOBAL TRANSCRIPTIONAL REGULATOR CODY"/>
    <property type="match status" value="1"/>
</dbReference>
<dbReference type="PANTHER" id="PTHR40062">
    <property type="entry name" value="GTP-SENSING TRANSCRIPTIONAL PLEIOTROPIC REPRESSOR CODY"/>
    <property type="match status" value="1"/>
</dbReference>
<dbReference type="Pfam" id="PF06018">
    <property type="entry name" value="CodY"/>
    <property type="match status" value="1"/>
</dbReference>
<dbReference type="Pfam" id="PF08222">
    <property type="entry name" value="HTH_CodY"/>
    <property type="match status" value="1"/>
</dbReference>
<dbReference type="PIRSF" id="PIRSF011572">
    <property type="entry name" value="GTP_sensing_CodY"/>
    <property type="match status" value="1"/>
</dbReference>
<dbReference type="SUPFAM" id="SSF46785">
    <property type="entry name" value="Winged helix' DNA-binding domain"/>
    <property type="match status" value="1"/>
</dbReference>
<feature type="chain" id="PRO_1000147207" description="Global transcriptional regulator CodY">
    <location>
        <begin position="1"/>
        <end position="257"/>
    </location>
</feature>
<feature type="DNA-binding region" description="H-T-H motif" evidence="1">
    <location>
        <begin position="203"/>
        <end position="222"/>
    </location>
</feature>
<feature type="region of interest" description="GAF domain" evidence="1">
    <location>
        <begin position="1"/>
        <end position="155"/>
    </location>
</feature>
<protein>
    <recommendedName>
        <fullName evidence="1">Global transcriptional regulator CodY</fullName>
    </recommendedName>
</protein>
<name>CODY_STACT</name>
<gene>
    <name evidence="1" type="primary">codY</name>
    <name type="ordered locus">Sca_0890</name>
</gene>
<evidence type="ECO:0000255" key="1">
    <source>
        <dbReference type="HAMAP-Rule" id="MF_00621"/>
    </source>
</evidence>